<protein>
    <recommendedName>
        <fullName evidence="1">Histidine--tRNA ligase</fullName>
        <ecNumber evidence="1">6.1.1.21</ecNumber>
    </recommendedName>
    <alternativeName>
        <fullName evidence="1">Histidyl-tRNA synthetase</fullName>
        <shortName evidence="1">HisRS</shortName>
    </alternativeName>
</protein>
<dbReference type="EC" id="6.1.1.21" evidence="1"/>
<dbReference type="EMBL" id="CP000077">
    <property type="protein sequence ID" value="AAY80047.1"/>
    <property type="molecule type" value="Genomic_DNA"/>
</dbReference>
<dbReference type="RefSeq" id="WP_011277549.1">
    <property type="nucleotide sequence ID" value="NC_007181.1"/>
</dbReference>
<dbReference type="SMR" id="Q4JAY2"/>
<dbReference type="STRING" id="330779.Saci_0663"/>
<dbReference type="GeneID" id="14551182"/>
<dbReference type="KEGG" id="sai:Saci_0663"/>
<dbReference type="PATRIC" id="fig|330779.12.peg.633"/>
<dbReference type="eggNOG" id="arCOG00404">
    <property type="taxonomic scope" value="Archaea"/>
</dbReference>
<dbReference type="HOGENOM" id="CLU_025113_3_1_2"/>
<dbReference type="Proteomes" id="UP000001018">
    <property type="component" value="Chromosome"/>
</dbReference>
<dbReference type="GO" id="GO:0005737">
    <property type="term" value="C:cytoplasm"/>
    <property type="evidence" value="ECO:0007669"/>
    <property type="project" value="UniProtKB-SubCell"/>
</dbReference>
<dbReference type="GO" id="GO:0005524">
    <property type="term" value="F:ATP binding"/>
    <property type="evidence" value="ECO:0007669"/>
    <property type="project" value="UniProtKB-UniRule"/>
</dbReference>
<dbReference type="GO" id="GO:0004821">
    <property type="term" value="F:histidine-tRNA ligase activity"/>
    <property type="evidence" value="ECO:0007669"/>
    <property type="project" value="UniProtKB-UniRule"/>
</dbReference>
<dbReference type="GO" id="GO:0006427">
    <property type="term" value="P:histidyl-tRNA aminoacylation"/>
    <property type="evidence" value="ECO:0007669"/>
    <property type="project" value="UniProtKB-UniRule"/>
</dbReference>
<dbReference type="GO" id="GO:0000105">
    <property type="term" value="P:L-histidine biosynthetic process"/>
    <property type="evidence" value="ECO:0007669"/>
    <property type="project" value="InterPro"/>
</dbReference>
<dbReference type="CDD" id="cd00773">
    <property type="entry name" value="HisRS-like_core"/>
    <property type="match status" value="1"/>
</dbReference>
<dbReference type="FunFam" id="3.30.930.10:FF:000121">
    <property type="entry name" value="Histidine--tRNA ligase"/>
    <property type="match status" value="1"/>
</dbReference>
<dbReference type="Gene3D" id="3.40.50.800">
    <property type="entry name" value="Anticodon-binding domain"/>
    <property type="match status" value="1"/>
</dbReference>
<dbReference type="Gene3D" id="3.30.930.10">
    <property type="entry name" value="Bira Bifunctional Protein, Domain 2"/>
    <property type="match status" value="1"/>
</dbReference>
<dbReference type="HAMAP" id="MF_00127">
    <property type="entry name" value="His_tRNA_synth"/>
    <property type="match status" value="1"/>
</dbReference>
<dbReference type="HAMAP" id="MF_00125">
    <property type="entry name" value="HisZ"/>
    <property type="match status" value="1"/>
</dbReference>
<dbReference type="InterPro" id="IPR006195">
    <property type="entry name" value="aa-tRNA-synth_II"/>
</dbReference>
<dbReference type="InterPro" id="IPR045864">
    <property type="entry name" value="aa-tRNA-synth_II/BPL/LPL"/>
</dbReference>
<dbReference type="InterPro" id="IPR004154">
    <property type="entry name" value="Anticodon-bd"/>
</dbReference>
<dbReference type="InterPro" id="IPR036621">
    <property type="entry name" value="Anticodon-bd_dom_sf"/>
</dbReference>
<dbReference type="InterPro" id="IPR015807">
    <property type="entry name" value="His-tRNA-ligase"/>
</dbReference>
<dbReference type="InterPro" id="IPR041715">
    <property type="entry name" value="HisRS-like_core"/>
</dbReference>
<dbReference type="InterPro" id="IPR004516">
    <property type="entry name" value="HisRS/HisZ"/>
</dbReference>
<dbReference type="InterPro" id="IPR004517">
    <property type="entry name" value="HisZ"/>
</dbReference>
<dbReference type="NCBIfam" id="TIGR00442">
    <property type="entry name" value="hisS"/>
    <property type="match status" value="1"/>
</dbReference>
<dbReference type="PANTHER" id="PTHR43707:SF1">
    <property type="entry name" value="HISTIDINE--TRNA LIGASE, MITOCHONDRIAL-RELATED"/>
    <property type="match status" value="1"/>
</dbReference>
<dbReference type="PANTHER" id="PTHR43707">
    <property type="entry name" value="HISTIDYL-TRNA SYNTHETASE"/>
    <property type="match status" value="1"/>
</dbReference>
<dbReference type="Pfam" id="PF03129">
    <property type="entry name" value="HGTP_anticodon"/>
    <property type="match status" value="1"/>
</dbReference>
<dbReference type="Pfam" id="PF13393">
    <property type="entry name" value="tRNA-synt_His"/>
    <property type="match status" value="1"/>
</dbReference>
<dbReference type="PIRSF" id="PIRSF001549">
    <property type="entry name" value="His-tRNA_synth"/>
    <property type="match status" value="1"/>
</dbReference>
<dbReference type="SUPFAM" id="SSF52954">
    <property type="entry name" value="Class II aaRS ABD-related"/>
    <property type="match status" value="1"/>
</dbReference>
<dbReference type="SUPFAM" id="SSF55681">
    <property type="entry name" value="Class II aaRS and biotin synthetases"/>
    <property type="match status" value="1"/>
</dbReference>
<dbReference type="PROSITE" id="PS50862">
    <property type="entry name" value="AA_TRNA_LIGASE_II"/>
    <property type="match status" value="1"/>
</dbReference>
<reference key="1">
    <citation type="journal article" date="2005" name="J. Bacteriol.">
        <title>The genome of Sulfolobus acidocaldarius, a model organism of the Crenarchaeota.</title>
        <authorList>
            <person name="Chen L."/>
            <person name="Bruegger K."/>
            <person name="Skovgaard M."/>
            <person name="Redder P."/>
            <person name="She Q."/>
            <person name="Torarinsson E."/>
            <person name="Greve B."/>
            <person name="Awayez M."/>
            <person name="Zibat A."/>
            <person name="Klenk H.-P."/>
            <person name="Garrett R.A."/>
        </authorList>
    </citation>
    <scope>NUCLEOTIDE SEQUENCE [LARGE SCALE GENOMIC DNA]</scope>
    <source>
        <strain>ATCC 33909 / DSM 639 / JCM 8929 / NBRC 15157 / NCIMB 11770</strain>
    </source>
</reference>
<evidence type="ECO:0000255" key="1">
    <source>
        <dbReference type="HAMAP-Rule" id="MF_00127"/>
    </source>
</evidence>
<feature type="chain" id="PRO_0000136324" description="Histidine--tRNA ligase">
    <location>
        <begin position="1"/>
        <end position="428"/>
    </location>
</feature>
<proteinExistence type="inferred from homology"/>
<name>SYH_SULAC</name>
<comment type="catalytic activity">
    <reaction evidence="1">
        <text>tRNA(His) + L-histidine + ATP = L-histidyl-tRNA(His) + AMP + diphosphate + H(+)</text>
        <dbReference type="Rhea" id="RHEA:17313"/>
        <dbReference type="Rhea" id="RHEA-COMP:9665"/>
        <dbReference type="Rhea" id="RHEA-COMP:9689"/>
        <dbReference type="ChEBI" id="CHEBI:15378"/>
        <dbReference type="ChEBI" id="CHEBI:30616"/>
        <dbReference type="ChEBI" id="CHEBI:33019"/>
        <dbReference type="ChEBI" id="CHEBI:57595"/>
        <dbReference type="ChEBI" id="CHEBI:78442"/>
        <dbReference type="ChEBI" id="CHEBI:78527"/>
        <dbReference type="ChEBI" id="CHEBI:456215"/>
        <dbReference type="EC" id="6.1.1.21"/>
    </reaction>
</comment>
<comment type="subcellular location">
    <subcellularLocation>
        <location evidence="1">Cytoplasm</location>
    </subcellularLocation>
</comment>
<comment type="similarity">
    <text evidence="1">Belongs to the class-II aminoacyl-tRNA synthetase family.</text>
</comment>
<sequence>MSEFEPIRGMKDYYGEELNKIKFIEETFRTVVLNSGYQEVYTPIVEDFKLFSLKSGEEIRKTMYVFKDKADREVALRPEITPSIVRVYLNSMQHLPKPLRLFYVGQVYRYDEPQFGRYREFRQAGVELLGSSSSFADIEVISLLNEIYDSLGLKDKIIIKINNIGIYREIFNKAGITEEQQEHLLHLIDKGKVDDALKEFTDNNYKDLITYLISLKFDKLESDKLESLRREVSKYNFNLEGEINKLSFISEVLEDLGVKIKIDLGFVRGLAYYTGVIFEVIHPDVSFSIAGGGRYDNLVRLYGGADTPAIGFAIGVERTALVINKIKSDLQRKKIAVIPLISTKDSLSLAIRLLNILRKNNIIGVLNLKDVPLSKLMTYYVEEGYNAIVLIGKKELEENSITIKFLEKREQKTVKLEKIEDVLINNLS</sequence>
<keyword id="KW-0030">Aminoacyl-tRNA synthetase</keyword>
<keyword id="KW-0067">ATP-binding</keyword>
<keyword id="KW-0963">Cytoplasm</keyword>
<keyword id="KW-0436">Ligase</keyword>
<keyword id="KW-0547">Nucleotide-binding</keyword>
<keyword id="KW-0648">Protein biosynthesis</keyword>
<keyword id="KW-1185">Reference proteome</keyword>
<accession>Q4JAY2</accession>
<organism>
    <name type="scientific">Sulfolobus acidocaldarius (strain ATCC 33909 / DSM 639 / JCM 8929 / NBRC 15157 / NCIMB 11770)</name>
    <dbReference type="NCBI Taxonomy" id="330779"/>
    <lineage>
        <taxon>Archaea</taxon>
        <taxon>Thermoproteota</taxon>
        <taxon>Thermoprotei</taxon>
        <taxon>Sulfolobales</taxon>
        <taxon>Sulfolobaceae</taxon>
        <taxon>Sulfolobus</taxon>
    </lineage>
</organism>
<gene>
    <name evidence="1" type="primary">hisS</name>
    <name type="ordered locus">Saci_0663</name>
</gene>